<gene>
    <name evidence="1" type="primary">fusA</name>
    <name type="ordered locus">LIC_10272</name>
</gene>
<protein>
    <recommendedName>
        <fullName evidence="1">Elongation factor G</fullName>
        <shortName evidence="1">EF-G</shortName>
    </recommendedName>
</protein>
<name>EFG_LEPIC</name>
<comment type="function">
    <text evidence="1">Catalyzes the GTP-dependent ribosomal translocation step during translation elongation. During this step, the ribosome changes from the pre-translocational (PRE) to the post-translocational (POST) state as the newly formed A-site-bound peptidyl-tRNA and P-site-bound deacylated tRNA move to the P and E sites, respectively. Catalyzes the coordinated movement of the two tRNA molecules, the mRNA and conformational changes in the ribosome.</text>
</comment>
<comment type="subcellular location">
    <subcellularLocation>
        <location evidence="1">Cytoplasm</location>
    </subcellularLocation>
</comment>
<comment type="similarity">
    <text evidence="1">Belongs to the TRAFAC class translation factor GTPase superfamily. Classic translation factor GTPase family. EF-G/EF-2 subfamily.</text>
</comment>
<dbReference type="EMBL" id="AE016823">
    <property type="protein sequence ID" value="AAS68899.1"/>
    <property type="molecule type" value="Genomic_DNA"/>
</dbReference>
<dbReference type="RefSeq" id="WP_000102023.1">
    <property type="nucleotide sequence ID" value="NC_005823.1"/>
</dbReference>
<dbReference type="SMR" id="Q72VM5"/>
<dbReference type="GeneID" id="61143624"/>
<dbReference type="KEGG" id="lic:LIC_10272"/>
<dbReference type="HOGENOM" id="CLU_002794_4_1_12"/>
<dbReference type="Proteomes" id="UP000007037">
    <property type="component" value="Chromosome I"/>
</dbReference>
<dbReference type="GO" id="GO:0005737">
    <property type="term" value="C:cytoplasm"/>
    <property type="evidence" value="ECO:0007669"/>
    <property type="project" value="UniProtKB-SubCell"/>
</dbReference>
<dbReference type="GO" id="GO:0005525">
    <property type="term" value="F:GTP binding"/>
    <property type="evidence" value="ECO:0007669"/>
    <property type="project" value="UniProtKB-UniRule"/>
</dbReference>
<dbReference type="GO" id="GO:0003924">
    <property type="term" value="F:GTPase activity"/>
    <property type="evidence" value="ECO:0007669"/>
    <property type="project" value="InterPro"/>
</dbReference>
<dbReference type="GO" id="GO:0003746">
    <property type="term" value="F:translation elongation factor activity"/>
    <property type="evidence" value="ECO:0007669"/>
    <property type="project" value="UniProtKB-UniRule"/>
</dbReference>
<dbReference type="CDD" id="cd01886">
    <property type="entry name" value="EF-G"/>
    <property type="match status" value="1"/>
</dbReference>
<dbReference type="CDD" id="cd16262">
    <property type="entry name" value="EFG_III"/>
    <property type="match status" value="1"/>
</dbReference>
<dbReference type="CDD" id="cd01434">
    <property type="entry name" value="EFG_mtEFG1_IV"/>
    <property type="match status" value="1"/>
</dbReference>
<dbReference type="CDD" id="cd04091">
    <property type="entry name" value="mtEFG1_II_like"/>
    <property type="match status" value="1"/>
</dbReference>
<dbReference type="FunFam" id="3.30.230.10:FF:000003">
    <property type="entry name" value="Elongation factor G"/>
    <property type="match status" value="1"/>
</dbReference>
<dbReference type="FunFam" id="3.30.70.240:FF:000001">
    <property type="entry name" value="Elongation factor G"/>
    <property type="match status" value="1"/>
</dbReference>
<dbReference type="FunFam" id="3.30.70.870:FF:000001">
    <property type="entry name" value="Elongation factor G"/>
    <property type="match status" value="1"/>
</dbReference>
<dbReference type="FunFam" id="3.40.50.300:FF:001393">
    <property type="entry name" value="Elongation factor G"/>
    <property type="match status" value="1"/>
</dbReference>
<dbReference type="FunFam" id="2.40.30.10:FF:000022">
    <property type="entry name" value="Elongation factor G, mitochondrial"/>
    <property type="match status" value="1"/>
</dbReference>
<dbReference type="Gene3D" id="3.30.230.10">
    <property type="match status" value="1"/>
</dbReference>
<dbReference type="Gene3D" id="3.30.70.240">
    <property type="match status" value="1"/>
</dbReference>
<dbReference type="Gene3D" id="3.30.70.870">
    <property type="entry name" value="Elongation Factor G (Translational Gtpase), domain 3"/>
    <property type="match status" value="1"/>
</dbReference>
<dbReference type="Gene3D" id="3.40.50.300">
    <property type="entry name" value="P-loop containing nucleotide triphosphate hydrolases"/>
    <property type="match status" value="1"/>
</dbReference>
<dbReference type="Gene3D" id="2.40.30.10">
    <property type="entry name" value="Translation factors"/>
    <property type="match status" value="1"/>
</dbReference>
<dbReference type="HAMAP" id="MF_00054_B">
    <property type="entry name" value="EF_G_EF_2_B"/>
    <property type="match status" value="1"/>
</dbReference>
<dbReference type="InterPro" id="IPR041095">
    <property type="entry name" value="EFG_II"/>
</dbReference>
<dbReference type="InterPro" id="IPR009022">
    <property type="entry name" value="EFG_III"/>
</dbReference>
<dbReference type="InterPro" id="IPR035647">
    <property type="entry name" value="EFG_III/V"/>
</dbReference>
<dbReference type="InterPro" id="IPR047872">
    <property type="entry name" value="EFG_IV"/>
</dbReference>
<dbReference type="InterPro" id="IPR000640">
    <property type="entry name" value="EFG_V-like"/>
</dbReference>
<dbReference type="InterPro" id="IPR004161">
    <property type="entry name" value="EFTu-like_2"/>
</dbReference>
<dbReference type="InterPro" id="IPR031157">
    <property type="entry name" value="G_TR_CS"/>
</dbReference>
<dbReference type="InterPro" id="IPR027417">
    <property type="entry name" value="P-loop_NTPase"/>
</dbReference>
<dbReference type="InterPro" id="IPR020568">
    <property type="entry name" value="Ribosomal_Su5_D2-typ_SF"/>
</dbReference>
<dbReference type="InterPro" id="IPR014721">
    <property type="entry name" value="Ribsml_uS5_D2-typ_fold_subgr"/>
</dbReference>
<dbReference type="InterPro" id="IPR005225">
    <property type="entry name" value="Small_GTP-bd"/>
</dbReference>
<dbReference type="InterPro" id="IPR000795">
    <property type="entry name" value="T_Tr_GTP-bd_dom"/>
</dbReference>
<dbReference type="InterPro" id="IPR009000">
    <property type="entry name" value="Transl_B-barrel_sf"/>
</dbReference>
<dbReference type="InterPro" id="IPR004540">
    <property type="entry name" value="Transl_elong_EFG/EF2"/>
</dbReference>
<dbReference type="InterPro" id="IPR005517">
    <property type="entry name" value="Transl_elong_EFG/EF2_IV"/>
</dbReference>
<dbReference type="NCBIfam" id="TIGR00484">
    <property type="entry name" value="EF-G"/>
    <property type="match status" value="1"/>
</dbReference>
<dbReference type="NCBIfam" id="NF009381">
    <property type="entry name" value="PRK12740.1-5"/>
    <property type="match status" value="1"/>
</dbReference>
<dbReference type="NCBIfam" id="TIGR00231">
    <property type="entry name" value="small_GTP"/>
    <property type="match status" value="1"/>
</dbReference>
<dbReference type="PANTHER" id="PTHR43636">
    <property type="entry name" value="ELONGATION FACTOR G, MITOCHONDRIAL"/>
    <property type="match status" value="1"/>
</dbReference>
<dbReference type="PANTHER" id="PTHR43636:SF2">
    <property type="entry name" value="ELONGATION FACTOR G, MITOCHONDRIAL"/>
    <property type="match status" value="1"/>
</dbReference>
<dbReference type="Pfam" id="PF00679">
    <property type="entry name" value="EFG_C"/>
    <property type="match status" value="1"/>
</dbReference>
<dbReference type="Pfam" id="PF14492">
    <property type="entry name" value="EFG_III"/>
    <property type="match status" value="1"/>
</dbReference>
<dbReference type="Pfam" id="PF03764">
    <property type="entry name" value="EFG_IV"/>
    <property type="match status" value="1"/>
</dbReference>
<dbReference type="Pfam" id="PF00009">
    <property type="entry name" value="GTP_EFTU"/>
    <property type="match status" value="1"/>
</dbReference>
<dbReference type="Pfam" id="PF03144">
    <property type="entry name" value="GTP_EFTU_D2"/>
    <property type="match status" value="1"/>
</dbReference>
<dbReference type="PRINTS" id="PR00315">
    <property type="entry name" value="ELONGATNFCT"/>
</dbReference>
<dbReference type="SMART" id="SM00838">
    <property type="entry name" value="EFG_C"/>
    <property type="match status" value="1"/>
</dbReference>
<dbReference type="SMART" id="SM00889">
    <property type="entry name" value="EFG_IV"/>
    <property type="match status" value="1"/>
</dbReference>
<dbReference type="SUPFAM" id="SSF54980">
    <property type="entry name" value="EF-G C-terminal domain-like"/>
    <property type="match status" value="2"/>
</dbReference>
<dbReference type="SUPFAM" id="SSF52540">
    <property type="entry name" value="P-loop containing nucleoside triphosphate hydrolases"/>
    <property type="match status" value="1"/>
</dbReference>
<dbReference type="SUPFAM" id="SSF54211">
    <property type="entry name" value="Ribosomal protein S5 domain 2-like"/>
    <property type="match status" value="1"/>
</dbReference>
<dbReference type="SUPFAM" id="SSF50447">
    <property type="entry name" value="Translation proteins"/>
    <property type="match status" value="1"/>
</dbReference>
<dbReference type="PROSITE" id="PS00301">
    <property type="entry name" value="G_TR_1"/>
    <property type="match status" value="1"/>
</dbReference>
<dbReference type="PROSITE" id="PS51722">
    <property type="entry name" value="G_TR_2"/>
    <property type="match status" value="1"/>
</dbReference>
<organism>
    <name type="scientific">Leptospira interrogans serogroup Icterohaemorrhagiae serovar copenhageni (strain Fiocruz L1-130)</name>
    <dbReference type="NCBI Taxonomy" id="267671"/>
    <lineage>
        <taxon>Bacteria</taxon>
        <taxon>Pseudomonadati</taxon>
        <taxon>Spirochaetota</taxon>
        <taxon>Spirochaetia</taxon>
        <taxon>Leptospirales</taxon>
        <taxon>Leptospiraceae</taxon>
        <taxon>Leptospira</taxon>
    </lineage>
</organism>
<reference key="1">
    <citation type="journal article" date="2004" name="J. Bacteriol.">
        <title>Comparative genomics of two Leptospira interrogans serovars reveals novel insights into physiology and pathogenesis.</title>
        <authorList>
            <person name="Nascimento A.L.T.O."/>
            <person name="Ko A.I."/>
            <person name="Martins E.A.L."/>
            <person name="Monteiro-Vitorello C.B."/>
            <person name="Ho P.L."/>
            <person name="Haake D.A."/>
            <person name="Verjovski-Almeida S."/>
            <person name="Hartskeerl R.A."/>
            <person name="Marques M.V."/>
            <person name="Oliveira M.C."/>
            <person name="Menck C.F.M."/>
            <person name="Leite L.C.C."/>
            <person name="Carrer H."/>
            <person name="Coutinho L.L."/>
            <person name="Degrave W.M."/>
            <person name="Dellagostin O.A."/>
            <person name="El-Dorry H."/>
            <person name="Ferro E.S."/>
            <person name="Ferro M.I.T."/>
            <person name="Furlan L.R."/>
            <person name="Gamberini M."/>
            <person name="Giglioti E.A."/>
            <person name="Goes-Neto A."/>
            <person name="Goldman G.H."/>
            <person name="Goldman M.H.S."/>
            <person name="Harakava R."/>
            <person name="Jeronimo S.M.B."/>
            <person name="Junqueira-de-Azevedo I.L.M."/>
            <person name="Kimura E.T."/>
            <person name="Kuramae E.E."/>
            <person name="Lemos E.G.M."/>
            <person name="Lemos M.V.F."/>
            <person name="Marino C.L."/>
            <person name="Nunes L.R."/>
            <person name="de Oliveira R.C."/>
            <person name="Pereira G.G."/>
            <person name="Reis M.S."/>
            <person name="Schriefer A."/>
            <person name="Siqueira W.J."/>
            <person name="Sommer P."/>
            <person name="Tsai S.M."/>
            <person name="Simpson A.J.G."/>
            <person name="Ferro J.A."/>
            <person name="Camargo L.E.A."/>
            <person name="Kitajima J.P."/>
            <person name="Setubal J.C."/>
            <person name="Van Sluys M.A."/>
        </authorList>
    </citation>
    <scope>NUCLEOTIDE SEQUENCE [LARGE SCALE GENOMIC DNA]</scope>
    <source>
        <strain>Fiocruz L1-130</strain>
    </source>
</reference>
<proteinExistence type="inferred from homology"/>
<sequence length="706" mass="79001">MSTAVAEFKPSEKLLKTRNIGISAHIDSGKTTLTERILFYTNRIHAIHEVRGKDGVGAKMDSMDLERERGITIQSAATYCQWKNHTINIIDTPGHVDFTVEVERSLRVLDSAILVLCGVAGVQSQSITVDRQMRRYNVPRVAFINKLDRTGANPFRVIEQLKEKLKHNAVPVQIPIGLENDLKGIVDLVTMKAYYFEGKDGMDIQEKEIPDDLKELAQKKHEELLDAASMFSDELTEALLEGTPTEEMIKKAIRTGTIELKMTPVFMGSAFKNKGVQKLLDGVLDYLASPVDVKNKALDQNNNEEMIVLESNFEKPLVCLAFKLEDGRYGQLTYVRVYQGKLAKGMTIYNMSNNKKHNVGRLCRMHSDEMEDIDSAEAGDIIALFGIDCASGDTFTDGKLKVSMESMFVPAPVISLTIEAKESKHLNNLAKALNRFTKEDPTFQTHVDQESGQTIIKGMGELHLEVYIERMKREYGVELITGAPQVAYRETITSKADFDYTHKKQTGGQGQFGRVAGYMEPIPLEETLDYDFVNKVVGGAIPREYIQSVDKGFKSCLERGSLIGFPIIGVRCVINDGAYHDVDSSDMAFQIAGRYAFRQGFNKANPQILEPIMKVEVDGPSEFQGAILGSLNQRRGMILNTTEEDAYCKTEAEVPLADMFGYSTVLRSSTQGKAEFSMEFSRYAPVPRNVAEELMKKYKVNNKDED</sequence>
<evidence type="ECO:0000255" key="1">
    <source>
        <dbReference type="HAMAP-Rule" id="MF_00054"/>
    </source>
</evidence>
<accession>Q72VM5</accession>
<feature type="chain" id="PRO_0000091144" description="Elongation factor G">
    <location>
        <begin position="1"/>
        <end position="706"/>
    </location>
</feature>
<feature type="domain" description="tr-type G">
    <location>
        <begin position="15"/>
        <end position="291"/>
    </location>
</feature>
<feature type="binding site" evidence="1">
    <location>
        <begin position="24"/>
        <end position="31"/>
    </location>
    <ligand>
        <name>GTP</name>
        <dbReference type="ChEBI" id="CHEBI:37565"/>
    </ligand>
</feature>
<feature type="binding site" evidence="1">
    <location>
        <begin position="91"/>
        <end position="95"/>
    </location>
    <ligand>
        <name>GTP</name>
        <dbReference type="ChEBI" id="CHEBI:37565"/>
    </ligand>
</feature>
<feature type="binding site" evidence="1">
    <location>
        <begin position="145"/>
        <end position="148"/>
    </location>
    <ligand>
        <name>GTP</name>
        <dbReference type="ChEBI" id="CHEBI:37565"/>
    </ligand>
</feature>
<keyword id="KW-0963">Cytoplasm</keyword>
<keyword id="KW-0251">Elongation factor</keyword>
<keyword id="KW-0342">GTP-binding</keyword>
<keyword id="KW-0547">Nucleotide-binding</keyword>
<keyword id="KW-0648">Protein biosynthesis</keyword>